<organism>
    <name type="scientific">Zymomonas mobilis subsp. mobilis (strain ATCC 31821 / ZM4 / CP4)</name>
    <dbReference type="NCBI Taxonomy" id="264203"/>
    <lineage>
        <taxon>Bacteria</taxon>
        <taxon>Pseudomonadati</taxon>
        <taxon>Pseudomonadota</taxon>
        <taxon>Alphaproteobacteria</taxon>
        <taxon>Sphingomonadales</taxon>
        <taxon>Zymomonadaceae</taxon>
        <taxon>Zymomonas</taxon>
    </lineage>
</organism>
<evidence type="ECO:0000255" key="1">
    <source>
        <dbReference type="HAMAP-Rule" id="MF_00235"/>
    </source>
</evidence>
<sequence>MNIILFGPPGAGKGTQAHRLVHDFGMVQLSTGDILRQAVKEGTEVGKIAGELMKAGKLIPDDLMIRILGERLDKPDTKNGVIFDGFPRTKPQVEALDKLLAERHSKLDCVIEIKVDENALVKRIVGRYVCAQCGAGYHDEFKRPHKEGVCDICGSTEFKRRPDDNEEAVRARLVEYHEKTAPILPVYEARGIVAYVDGMLPMGDVATKIAEILKEKGAKPISA</sequence>
<gene>
    <name evidence="1" type="primary">adk</name>
    <name type="ordered locus">ZMO0538</name>
</gene>
<name>KAD_ZYMMO</name>
<protein>
    <recommendedName>
        <fullName evidence="1">Adenylate kinase</fullName>
        <shortName evidence="1">AK</shortName>
        <ecNumber evidence="1">2.7.4.3</ecNumber>
    </recommendedName>
    <alternativeName>
        <fullName evidence="1">ATP-AMP transphosphorylase</fullName>
    </alternativeName>
    <alternativeName>
        <fullName evidence="1">ATP:AMP phosphotransferase</fullName>
    </alternativeName>
    <alternativeName>
        <fullName evidence="1">Adenylate monophosphate kinase</fullName>
    </alternativeName>
</protein>
<accession>Q5NQ43</accession>
<keyword id="KW-0067">ATP-binding</keyword>
<keyword id="KW-0963">Cytoplasm</keyword>
<keyword id="KW-0418">Kinase</keyword>
<keyword id="KW-0479">Metal-binding</keyword>
<keyword id="KW-0545">Nucleotide biosynthesis</keyword>
<keyword id="KW-0547">Nucleotide-binding</keyword>
<keyword id="KW-1185">Reference proteome</keyword>
<keyword id="KW-0808">Transferase</keyword>
<keyword id="KW-0862">Zinc</keyword>
<reference key="1">
    <citation type="journal article" date="2005" name="Nat. Biotechnol.">
        <title>The genome sequence of the ethanologenic bacterium Zymomonas mobilis ZM4.</title>
        <authorList>
            <person name="Seo J.-S."/>
            <person name="Chong H."/>
            <person name="Park H.S."/>
            <person name="Yoon K.-O."/>
            <person name="Jung C."/>
            <person name="Kim J.J."/>
            <person name="Hong J.H."/>
            <person name="Kim H."/>
            <person name="Kim J.-H."/>
            <person name="Kil J.-I."/>
            <person name="Park C.J."/>
            <person name="Oh H.-M."/>
            <person name="Lee J.-S."/>
            <person name="Jin S.-J."/>
            <person name="Um H.-W."/>
            <person name="Lee H.-J."/>
            <person name="Oh S.-J."/>
            <person name="Kim J.Y."/>
            <person name="Kang H.L."/>
            <person name="Lee S.Y."/>
            <person name="Lee K.J."/>
            <person name="Kang H.S."/>
        </authorList>
    </citation>
    <scope>NUCLEOTIDE SEQUENCE [LARGE SCALE GENOMIC DNA]</scope>
    <source>
        <strain>ATCC 31821 / ZM4 / CP4</strain>
    </source>
</reference>
<proteinExistence type="inferred from homology"/>
<dbReference type="EC" id="2.7.4.3" evidence="1"/>
<dbReference type="EMBL" id="AE008692">
    <property type="protein sequence ID" value="AAV89162.1"/>
    <property type="molecule type" value="Genomic_DNA"/>
</dbReference>
<dbReference type="RefSeq" id="WP_011240444.1">
    <property type="nucleotide sequence ID" value="NZ_CP035711.1"/>
</dbReference>
<dbReference type="SMR" id="Q5NQ43"/>
<dbReference type="STRING" id="264203.ZMO0538"/>
<dbReference type="KEGG" id="zmo:ZMO0538"/>
<dbReference type="eggNOG" id="COG0563">
    <property type="taxonomic scope" value="Bacteria"/>
</dbReference>
<dbReference type="HOGENOM" id="CLU_032354_1_2_5"/>
<dbReference type="UniPathway" id="UPA00588">
    <property type="reaction ID" value="UER00649"/>
</dbReference>
<dbReference type="Proteomes" id="UP000001173">
    <property type="component" value="Chromosome"/>
</dbReference>
<dbReference type="GO" id="GO:0005737">
    <property type="term" value="C:cytoplasm"/>
    <property type="evidence" value="ECO:0007669"/>
    <property type="project" value="UniProtKB-SubCell"/>
</dbReference>
<dbReference type="GO" id="GO:0004017">
    <property type="term" value="F:adenylate kinase activity"/>
    <property type="evidence" value="ECO:0007669"/>
    <property type="project" value="UniProtKB-UniRule"/>
</dbReference>
<dbReference type="GO" id="GO:0005524">
    <property type="term" value="F:ATP binding"/>
    <property type="evidence" value="ECO:0007669"/>
    <property type="project" value="UniProtKB-UniRule"/>
</dbReference>
<dbReference type="GO" id="GO:0008270">
    <property type="term" value="F:zinc ion binding"/>
    <property type="evidence" value="ECO:0007669"/>
    <property type="project" value="UniProtKB-UniRule"/>
</dbReference>
<dbReference type="GO" id="GO:0044209">
    <property type="term" value="P:AMP salvage"/>
    <property type="evidence" value="ECO:0007669"/>
    <property type="project" value="UniProtKB-UniRule"/>
</dbReference>
<dbReference type="CDD" id="cd01428">
    <property type="entry name" value="ADK"/>
    <property type="match status" value="1"/>
</dbReference>
<dbReference type="FunFam" id="3.40.50.300:FF:000106">
    <property type="entry name" value="Adenylate kinase mitochondrial"/>
    <property type="match status" value="1"/>
</dbReference>
<dbReference type="Gene3D" id="3.40.50.300">
    <property type="entry name" value="P-loop containing nucleotide triphosphate hydrolases"/>
    <property type="match status" value="1"/>
</dbReference>
<dbReference type="HAMAP" id="MF_00235">
    <property type="entry name" value="Adenylate_kinase_Adk"/>
    <property type="match status" value="1"/>
</dbReference>
<dbReference type="InterPro" id="IPR006259">
    <property type="entry name" value="Adenyl_kin_sub"/>
</dbReference>
<dbReference type="InterPro" id="IPR000850">
    <property type="entry name" value="Adenylat/UMP-CMP_kin"/>
</dbReference>
<dbReference type="InterPro" id="IPR033690">
    <property type="entry name" value="Adenylat_kinase_CS"/>
</dbReference>
<dbReference type="InterPro" id="IPR007862">
    <property type="entry name" value="Adenylate_kinase_lid-dom"/>
</dbReference>
<dbReference type="InterPro" id="IPR036193">
    <property type="entry name" value="ADK_active_lid_dom_sf"/>
</dbReference>
<dbReference type="InterPro" id="IPR027417">
    <property type="entry name" value="P-loop_NTPase"/>
</dbReference>
<dbReference type="NCBIfam" id="TIGR01351">
    <property type="entry name" value="adk"/>
    <property type="match status" value="1"/>
</dbReference>
<dbReference type="NCBIfam" id="NF001380">
    <property type="entry name" value="PRK00279.1-2"/>
    <property type="match status" value="1"/>
</dbReference>
<dbReference type="NCBIfam" id="NF001381">
    <property type="entry name" value="PRK00279.1-3"/>
    <property type="match status" value="1"/>
</dbReference>
<dbReference type="NCBIfam" id="NF011100">
    <property type="entry name" value="PRK14527.1"/>
    <property type="match status" value="1"/>
</dbReference>
<dbReference type="NCBIfam" id="NF011105">
    <property type="entry name" value="PRK14532.1"/>
    <property type="match status" value="1"/>
</dbReference>
<dbReference type="PANTHER" id="PTHR23359">
    <property type="entry name" value="NUCLEOTIDE KINASE"/>
    <property type="match status" value="1"/>
</dbReference>
<dbReference type="Pfam" id="PF00406">
    <property type="entry name" value="ADK"/>
    <property type="match status" value="1"/>
</dbReference>
<dbReference type="Pfam" id="PF05191">
    <property type="entry name" value="ADK_lid"/>
    <property type="match status" value="1"/>
</dbReference>
<dbReference type="PRINTS" id="PR00094">
    <property type="entry name" value="ADENYLTKNASE"/>
</dbReference>
<dbReference type="SUPFAM" id="SSF57774">
    <property type="entry name" value="Microbial and mitochondrial ADK, insert 'zinc finger' domain"/>
    <property type="match status" value="1"/>
</dbReference>
<dbReference type="SUPFAM" id="SSF52540">
    <property type="entry name" value="P-loop containing nucleoside triphosphate hydrolases"/>
    <property type="match status" value="1"/>
</dbReference>
<dbReference type="PROSITE" id="PS00113">
    <property type="entry name" value="ADENYLATE_KINASE"/>
    <property type="match status" value="1"/>
</dbReference>
<comment type="function">
    <text evidence="1">Catalyzes the reversible transfer of the terminal phosphate group between ATP and AMP. Plays an important role in cellular energy homeostasis and in adenine nucleotide metabolism.</text>
</comment>
<comment type="catalytic activity">
    <reaction evidence="1">
        <text>AMP + ATP = 2 ADP</text>
        <dbReference type="Rhea" id="RHEA:12973"/>
        <dbReference type="ChEBI" id="CHEBI:30616"/>
        <dbReference type="ChEBI" id="CHEBI:456215"/>
        <dbReference type="ChEBI" id="CHEBI:456216"/>
        <dbReference type="EC" id="2.7.4.3"/>
    </reaction>
</comment>
<comment type="pathway">
    <text evidence="1">Purine metabolism; AMP biosynthesis via salvage pathway; AMP from ADP: step 1/1.</text>
</comment>
<comment type="subunit">
    <text evidence="1">Monomer.</text>
</comment>
<comment type="subcellular location">
    <subcellularLocation>
        <location evidence="1">Cytoplasm</location>
    </subcellularLocation>
</comment>
<comment type="domain">
    <text evidence="1">Consists of three domains, a large central CORE domain and two small peripheral domains, NMPbind and LID, which undergo movements during catalysis. The LID domain closes over the site of phosphoryl transfer upon ATP binding. Assembling and dissambling the active center during each catalytic cycle provides an effective means to prevent ATP hydrolysis. Some bacteria have evolved a zinc-coordinating structure that stabilizes the LID domain.</text>
</comment>
<comment type="similarity">
    <text evidence="1">Belongs to the adenylate kinase family.</text>
</comment>
<feature type="chain" id="PRO_1000021784" description="Adenylate kinase">
    <location>
        <begin position="1"/>
        <end position="223"/>
    </location>
</feature>
<feature type="region of interest" description="NMP" evidence="1">
    <location>
        <begin position="30"/>
        <end position="59"/>
    </location>
</feature>
<feature type="region of interest" description="LID" evidence="1">
    <location>
        <begin position="126"/>
        <end position="163"/>
    </location>
</feature>
<feature type="binding site" evidence="1">
    <location>
        <begin position="10"/>
        <end position="15"/>
    </location>
    <ligand>
        <name>ATP</name>
        <dbReference type="ChEBI" id="CHEBI:30616"/>
    </ligand>
</feature>
<feature type="binding site" evidence="1">
    <location>
        <position position="31"/>
    </location>
    <ligand>
        <name>AMP</name>
        <dbReference type="ChEBI" id="CHEBI:456215"/>
    </ligand>
</feature>
<feature type="binding site" evidence="1">
    <location>
        <position position="36"/>
    </location>
    <ligand>
        <name>AMP</name>
        <dbReference type="ChEBI" id="CHEBI:456215"/>
    </ligand>
</feature>
<feature type="binding site" evidence="1">
    <location>
        <begin position="57"/>
        <end position="59"/>
    </location>
    <ligand>
        <name>AMP</name>
        <dbReference type="ChEBI" id="CHEBI:456215"/>
    </ligand>
</feature>
<feature type="binding site" evidence="1">
    <location>
        <begin position="85"/>
        <end position="88"/>
    </location>
    <ligand>
        <name>AMP</name>
        <dbReference type="ChEBI" id="CHEBI:456215"/>
    </ligand>
</feature>
<feature type="binding site" evidence="1">
    <location>
        <position position="92"/>
    </location>
    <ligand>
        <name>AMP</name>
        <dbReference type="ChEBI" id="CHEBI:456215"/>
    </ligand>
</feature>
<feature type="binding site" evidence="1">
    <location>
        <position position="127"/>
    </location>
    <ligand>
        <name>ATP</name>
        <dbReference type="ChEBI" id="CHEBI:30616"/>
    </ligand>
</feature>
<feature type="binding site" evidence="1">
    <location>
        <position position="130"/>
    </location>
    <ligand>
        <name>Zn(2+)</name>
        <dbReference type="ChEBI" id="CHEBI:29105"/>
        <note>structural</note>
    </ligand>
</feature>
<feature type="binding site" evidence="1">
    <location>
        <position position="133"/>
    </location>
    <ligand>
        <name>Zn(2+)</name>
        <dbReference type="ChEBI" id="CHEBI:29105"/>
        <note>structural</note>
    </ligand>
</feature>
<feature type="binding site" evidence="1">
    <location>
        <position position="150"/>
    </location>
    <ligand>
        <name>Zn(2+)</name>
        <dbReference type="ChEBI" id="CHEBI:29105"/>
        <note>structural</note>
    </ligand>
</feature>
<feature type="binding site" evidence="1">
    <location>
        <position position="153"/>
    </location>
    <ligand>
        <name>Zn(2+)</name>
        <dbReference type="ChEBI" id="CHEBI:29105"/>
        <note>structural</note>
    </ligand>
</feature>
<feature type="binding site" evidence="1">
    <location>
        <position position="160"/>
    </location>
    <ligand>
        <name>AMP</name>
        <dbReference type="ChEBI" id="CHEBI:456215"/>
    </ligand>
</feature>
<feature type="binding site" evidence="1">
    <location>
        <position position="172"/>
    </location>
    <ligand>
        <name>AMP</name>
        <dbReference type="ChEBI" id="CHEBI:456215"/>
    </ligand>
</feature>
<feature type="binding site" evidence="1">
    <location>
        <position position="200"/>
    </location>
    <ligand>
        <name>ATP</name>
        <dbReference type="ChEBI" id="CHEBI:30616"/>
    </ligand>
</feature>